<reference key="1">
    <citation type="journal article" date="1984" name="EMBO J.">
        <title>The nucleotide sequence of maize streak virus DNA.</title>
        <authorList>
            <person name="Mullineaux P.M."/>
            <person name="Donson J."/>
            <person name="Morris-Krsinich B.A.M."/>
            <person name="Boulton M.I."/>
            <person name="Davies J.W."/>
        </authorList>
    </citation>
    <scope>NUCLEOTIDE SEQUENCE [GENOMIC DNA]</scope>
</reference>
<reference key="2">
    <citation type="journal article" date="1998" name="Plant Mol. Biol.">
        <title>Prediction of functional regions of the maize streak virus replication-associated proteins by protein-protein interaction analysis.</title>
        <authorList>
            <person name="Horvath G.V."/>
            <person name="Pettko-Szandtner A."/>
            <person name="Nikovics K."/>
            <person name="Bilgin M."/>
            <person name="Boulton M.I."/>
            <person name="Davies J.W."/>
            <person name="Gutierrez C."/>
            <person name="Dudits D."/>
        </authorList>
    </citation>
    <scope>REGION OF TRANSACTIVATION</scope>
    <scope>REGION OF OLIGOMERIZATION</scope>
    <scope>INTERACTION WITH ZEA MAYS RBR1</scope>
</reference>
<name>REPA_MSVN</name>
<comment type="function">
    <text evidence="1">Implicated in enhancement of V-sense gene expression. Acts a an inhibitor of C-sense gene transcription (By similarity).</text>
</comment>
<comment type="cofactor">
    <cofactor evidence="2">
        <name>Mg(2+)</name>
        <dbReference type="ChEBI" id="CHEBI:18420"/>
    </cofactor>
    <cofactor evidence="2">
        <name>Mn(2+)</name>
        <dbReference type="ChEBI" id="CHEBI:29035"/>
    </cofactor>
    <text evidence="2">Divalent metal cations, possibly Mg(2+) or Mn(2+).</text>
</comment>
<comment type="subunit">
    <text evidence="1">Homooligomer. Interacts with host retinoblastoma-related protein 1 (RBR1), and may thereby deregulate the host cell cycle. Part of the C- and V-complexes which are RepA-Rep-DNA complexes involved in the c-sense and v-sense transcription (By similarity).</text>
</comment>
<comment type="subcellular location">
    <subcellularLocation>
        <location evidence="1">Host nucleus</location>
    </subcellularLocation>
    <subcellularLocation>
        <location evidence="1">Host cytoplasm</location>
    </subcellularLocation>
</comment>
<comment type="alternative products">
    <event type="alternative splicing"/>
    <isoform>
        <id>P14980-1</id>
        <name>RepA</name>
        <sequence type="displayed"/>
    </isoform>
    <isoform>
        <id>P14978-1</id>
        <name>Rep</name>
        <sequence type="external"/>
    </isoform>
</comment>
<comment type="domain">
    <text>There are 3 rolling circle replication (RCR) motifs. RCR-2 may be involved in metal coordination. RCR-3 is required for phosphodiester bond cleavage for initiation of RCR.</text>
</comment>
<comment type="miscellaneous">
    <molecule>Isoform RepA</molecule>
    <text>Produced from the unspliced transcript.</text>
</comment>
<comment type="similarity">
    <text evidence="4">Belongs to the geminiviridae Rep protein family.</text>
</comment>
<proteinExistence type="evidence at protein level"/>
<evidence type="ECO:0000250" key="1"/>
<evidence type="ECO:0000255" key="2">
    <source>
        <dbReference type="PROSITE-ProRule" id="PRU01364"/>
    </source>
</evidence>
<evidence type="ECO:0000256" key="3">
    <source>
        <dbReference type="SAM" id="MobiDB-lite"/>
    </source>
</evidence>
<evidence type="ECO:0000305" key="4"/>
<gene>
    <name type="ORF">C1</name>
</gene>
<feature type="chain" id="PRO_0000222207" description="Replication-associated protein A">
    <location>
        <begin position="1"/>
        <end position="272"/>
    </location>
</feature>
<feature type="domain" description="CRESS-DNA virus Rep endonuclease" evidence="2">
    <location>
        <begin position="11"/>
        <end position="114"/>
    </location>
</feature>
<feature type="region of interest" description="Oligomerization">
    <location>
        <begin position="175"/>
        <end position="187"/>
    </location>
</feature>
<feature type="region of interest" description="Binding to RBR1">
    <location>
        <begin position="198"/>
        <end position="202"/>
    </location>
</feature>
<feature type="region of interest" description="Transactivation">
    <location>
        <begin position="221"/>
        <end position="230"/>
    </location>
</feature>
<feature type="region of interest" description="Disordered" evidence="3">
    <location>
        <begin position="245"/>
        <end position="272"/>
    </location>
</feature>
<feature type="short sequence motif" description="RCR-1" evidence="2">
    <location>
        <begin position="18"/>
        <end position="21"/>
    </location>
</feature>
<feature type="short sequence motif" description="RCR-2" evidence="2">
    <location>
        <begin position="60"/>
        <end position="62"/>
    </location>
</feature>
<feature type="short sequence motif" description="RCR-3" evidence="2">
    <location>
        <begin position="100"/>
        <end position="103"/>
    </location>
</feature>
<feature type="compositionally biased region" description="Polar residues" evidence="3">
    <location>
        <begin position="254"/>
        <end position="264"/>
    </location>
</feature>
<feature type="active site" description="For DNA cleavage activity" evidence="2">
    <location>
        <position position="100"/>
    </location>
</feature>
<feature type="binding site" evidence="2">
    <location>
        <position position="52"/>
    </location>
    <ligand>
        <name>a divalent metal cation</name>
        <dbReference type="ChEBI" id="CHEBI:60240"/>
    </ligand>
</feature>
<feature type="binding site" evidence="2">
    <location>
        <position position="60"/>
    </location>
    <ligand>
        <name>a divalent metal cation</name>
        <dbReference type="ChEBI" id="CHEBI:60240"/>
    </ligand>
</feature>
<feature type="binding site" evidence="2">
    <location>
        <position position="62"/>
    </location>
    <ligand>
        <name>a divalent metal cation</name>
        <dbReference type="ChEBI" id="CHEBI:60240"/>
    </ligand>
</feature>
<feature type="binding site" evidence="2">
    <location>
        <position position="104"/>
    </location>
    <ligand>
        <name>a divalent metal cation</name>
        <dbReference type="ChEBI" id="CHEBI:60240"/>
    </ligand>
</feature>
<sequence>MASSSSNRQFSHRNANTFLTYPKCPENPEIACQMIWELVVRWIPKYILCAREAHKDGSLHLHALLQTEKPVRISDSRFFDINGFHPNIQSAKSVNRVRDYILKEPLAVFERGTFIPRKSPFLGKSDSEVKEKKPSKDEIMRDIISHATSKEEYLSMIQKELPFDWSTKLQYFEYSANKLFPEIQEEFTNPHPPSSPDLLCNESINDWLQPNIFQVSPEAYMLLQPTCYTLEDAISDLQWMDSVSSHQMKDQESRASTSSAQQEPENLLGPEA</sequence>
<accession>P14980</accession>
<organism>
    <name type="scientific">Maize streak virus genotype A (isolate Nigeria)</name>
    <name type="common">MSV</name>
    <dbReference type="NCBI Taxonomy" id="10823"/>
    <lineage>
        <taxon>Viruses</taxon>
        <taxon>Monodnaviria</taxon>
        <taxon>Shotokuvirae</taxon>
        <taxon>Cressdnaviricota</taxon>
        <taxon>Repensiviricetes</taxon>
        <taxon>Geplafuvirales</taxon>
        <taxon>Geminiviridae</taxon>
        <taxon>Mastrevirus</taxon>
        <taxon>Maize streak virus</taxon>
    </lineage>
</organism>
<dbReference type="EC" id="3.1.21.-"/>
<dbReference type="EMBL" id="X01633">
    <property type="protein sequence ID" value="CAA25793.1"/>
    <property type="molecule type" value="Genomic_DNA"/>
</dbReference>
<dbReference type="PIR" id="A05158">
    <property type="entry name" value="A05158"/>
</dbReference>
<dbReference type="SMR" id="P14980"/>
<dbReference type="Proteomes" id="UP000007779">
    <property type="component" value="Genome"/>
</dbReference>
<dbReference type="GO" id="GO:0030430">
    <property type="term" value="C:host cell cytoplasm"/>
    <property type="evidence" value="ECO:0007669"/>
    <property type="project" value="UniProtKB-SubCell"/>
</dbReference>
<dbReference type="GO" id="GO:0042025">
    <property type="term" value="C:host cell nucleus"/>
    <property type="evidence" value="ECO:0007669"/>
    <property type="project" value="UniProtKB-SubCell"/>
</dbReference>
<dbReference type="GO" id="GO:0003677">
    <property type="term" value="F:DNA binding"/>
    <property type="evidence" value="ECO:0007669"/>
    <property type="project" value="UniProtKB-KW"/>
</dbReference>
<dbReference type="GO" id="GO:0016888">
    <property type="term" value="F:endodeoxyribonuclease activity, producing 5'-phosphomonoesters"/>
    <property type="evidence" value="ECO:0007669"/>
    <property type="project" value="InterPro"/>
</dbReference>
<dbReference type="GO" id="GO:0046872">
    <property type="term" value="F:metal ion binding"/>
    <property type="evidence" value="ECO:0007669"/>
    <property type="project" value="UniProtKB-KW"/>
</dbReference>
<dbReference type="GO" id="GO:0000166">
    <property type="term" value="F:nucleotide binding"/>
    <property type="evidence" value="ECO:0007669"/>
    <property type="project" value="UniProtKB-KW"/>
</dbReference>
<dbReference type="GO" id="GO:0016779">
    <property type="term" value="F:nucleotidyltransferase activity"/>
    <property type="evidence" value="ECO:0007669"/>
    <property type="project" value="UniProtKB-KW"/>
</dbReference>
<dbReference type="GO" id="GO:0005198">
    <property type="term" value="F:structural molecule activity"/>
    <property type="evidence" value="ECO:0007669"/>
    <property type="project" value="InterPro"/>
</dbReference>
<dbReference type="GO" id="GO:0006260">
    <property type="term" value="P:DNA replication"/>
    <property type="evidence" value="ECO:0007669"/>
    <property type="project" value="UniProtKB-KW"/>
</dbReference>
<dbReference type="GO" id="GO:0039645">
    <property type="term" value="P:symbiont-mediated perturbation of host cell cycle G1/S transition checkpoint"/>
    <property type="evidence" value="ECO:0007669"/>
    <property type="project" value="UniProtKB-KW"/>
</dbReference>
<dbReference type="Gene3D" id="3.40.1310.20">
    <property type="match status" value="1"/>
</dbReference>
<dbReference type="InterPro" id="IPR049912">
    <property type="entry name" value="CRESS_DNA_REP"/>
</dbReference>
<dbReference type="InterPro" id="IPR001146">
    <property type="entry name" value="Gemini_AL1_MSV"/>
</dbReference>
<dbReference type="InterPro" id="IPR001191">
    <property type="entry name" value="Gemini_AL1_REP"/>
</dbReference>
<dbReference type="InterPro" id="IPR022692">
    <property type="entry name" value="Gemini_AL1_REP_central"/>
</dbReference>
<dbReference type="Pfam" id="PF00799">
    <property type="entry name" value="Gemini_AL1"/>
    <property type="match status" value="1"/>
</dbReference>
<dbReference type="Pfam" id="PF08283">
    <property type="entry name" value="Gemini_AL1_M"/>
    <property type="match status" value="1"/>
</dbReference>
<dbReference type="PRINTS" id="PR00227">
    <property type="entry name" value="GEMCOATAL1"/>
</dbReference>
<dbReference type="PRINTS" id="PR00229">
    <property type="entry name" value="GEMCOATMSVL1"/>
</dbReference>
<dbReference type="SUPFAM" id="SSF55464">
    <property type="entry name" value="Origin of replication-binding domain, RBD-like"/>
    <property type="match status" value="1"/>
</dbReference>
<dbReference type="PROSITE" id="PS52020">
    <property type="entry name" value="CRESS_DNA_REP"/>
    <property type="match status" value="1"/>
</dbReference>
<organismHost>
    <name type="scientific">Avena sativa</name>
    <name type="common">Oat</name>
    <dbReference type="NCBI Taxonomy" id="4498"/>
</organismHost>
<organismHost>
    <name type="scientific">Axonopus compressus</name>
    <dbReference type="NCBI Taxonomy" id="217170"/>
</organismHost>
<organismHost>
    <name type="scientific">Cenchrus americanus</name>
    <name type="common">Pearl millet</name>
    <name type="synonym">Pennisetum glaucum</name>
    <dbReference type="NCBI Taxonomy" id="4543"/>
</organismHost>
<organismHost>
    <name type="scientific">Cenchrus polystachios</name>
    <dbReference type="NCBI Taxonomy" id="281129"/>
</organismHost>
<organismHost>
    <name type="scientific">Coix lacryma-jobi</name>
    <name type="common">Job's tears</name>
    <dbReference type="NCBI Taxonomy" id="4505"/>
</organismHost>
<organismHost>
    <name type="scientific">Dactyloctenium aegyptium</name>
    <dbReference type="NCBI Taxonomy" id="270102"/>
</organismHost>
<organismHost>
    <name type="scientific">Digitaria</name>
    <dbReference type="NCBI Taxonomy" id="66017"/>
</organismHost>
<organismHost>
    <name type="scientific">Echinochloa colona</name>
    <dbReference type="NCBI Taxonomy" id="90396"/>
</organismHost>
<organismHost>
    <name type="scientific">Eleusine coracana</name>
    <name type="common">Indian finger millet</name>
    <name type="synonym">Ragi</name>
    <dbReference type="NCBI Taxonomy" id="4511"/>
</organismHost>
<organismHost>
    <name type="scientific">Eleusine indica</name>
    <name type="common">Goosegrass</name>
    <name type="synonym">Cynosurus indicus</name>
    <dbReference type="NCBI Taxonomy" id="29674"/>
</organismHost>
<organismHost>
    <name type="scientific">Hordeum vulgare</name>
    <name type="common">Barley</name>
    <dbReference type="NCBI Taxonomy" id="4513"/>
</organismHost>
<organismHost>
    <name type="scientific">Megathyrsus maximus</name>
    <dbReference type="NCBI Taxonomy" id="59788"/>
</organismHost>
<organismHost>
    <name type="scientific">Melinis repens</name>
    <name type="common">Red Natal grass</name>
    <name type="synonym">Rhynchelytrum repens</name>
    <dbReference type="NCBI Taxonomy" id="29709"/>
</organismHost>
<organismHost>
    <name type="scientific">Oryza glaberrima</name>
    <name type="common">African rice</name>
    <dbReference type="NCBI Taxonomy" id="4538"/>
</organismHost>
<organismHost>
    <name type="scientific">Oryza sativa</name>
    <name type="common">Rice</name>
    <dbReference type="NCBI Taxonomy" id="4530"/>
</organismHost>
<organismHost>
    <name type="scientific">Paspalum conjugatum</name>
    <name type="common">Hilo grass</name>
    <dbReference type="NCBI Taxonomy" id="158143"/>
</organismHost>
<organismHost>
    <name type="scientific">Paspalum notatum</name>
    <name type="common">Bahia grass</name>
    <dbReference type="NCBI Taxonomy" id="147272"/>
</organismHost>
<organismHost>
    <name type="scientific">Paspalum scrobiculatum</name>
    <dbReference type="NCBI Taxonomy" id="173849"/>
</organismHost>
<organismHost>
    <name type="scientific">Rottboellia cochinchinensis</name>
    <dbReference type="NCBI Taxonomy" id="300125"/>
</organismHost>
<organismHost>
    <name type="scientific">Saccharum officinarum</name>
    <name type="common">Sugarcane</name>
    <dbReference type="NCBI Taxonomy" id="4547"/>
</organismHost>
<organismHost>
    <name type="scientific">Setaria barbata</name>
    <dbReference type="NCBI Taxonomy" id="192628"/>
</organismHost>
<organismHost>
    <name type="scientific">Triticum aestivum</name>
    <name type="common">Wheat</name>
    <dbReference type="NCBI Taxonomy" id="4565"/>
</organismHost>
<organismHost>
    <name type="scientific">Urochloa deflexa</name>
    <dbReference type="NCBI Taxonomy" id="240436"/>
</organismHost>
<organismHost>
    <name type="scientific">Zea mays</name>
    <name type="common">Maize</name>
    <dbReference type="NCBI Taxonomy" id="4577"/>
</organismHost>
<protein>
    <recommendedName>
        <fullName>Replication-associated protein A</fullName>
        <shortName>RepA</shortName>
        <ecNumber>3.1.21.-</ecNumber>
    </recommendedName>
</protein>
<keyword id="KW-0010">Activator</keyword>
<keyword id="KW-0025">Alternative splicing</keyword>
<keyword id="KW-0190">Covalent protein-DNA linkage</keyword>
<keyword id="KW-0235">DNA replication</keyword>
<keyword id="KW-0238">DNA-binding</keyword>
<keyword id="KW-0255">Endonuclease</keyword>
<keyword id="KW-1078">G1/S host cell cycle checkpoint dysregulation by virus</keyword>
<keyword id="KW-1035">Host cytoplasm</keyword>
<keyword id="KW-1048">Host nucleus</keyword>
<keyword id="KW-0945">Host-virus interaction</keyword>
<keyword id="KW-0378">Hydrolase</keyword>
<keyword id="KW-0479">Metal-binding</keyword>
<keyword id="KW-1121">Modulation of host cell cycle by virus</keyword>
<keyword id="KW-0540">Nuclease</keyword>
<keyword id="KW-0547">Nucleotide-binding</keyword>
<keyword id="KW-0548">Nucleotidyltransferase</keyword>
<keyword id="KW-0678">Repressor</keyword>
<keyword id="KW-0808">Transferase</keyword>